<proteinExistence type="inferred from homology"/>
<feature type="chain" id="PRO_1000010811" description="Elongation factor P">
    <location>
        <begin position="1"/>
        <end position="188"/>
    </location>
</feature>
<keyword id="KW-0963">Cytoplasm</keyword>
<keyword id="KW-0251">Elongation factor</keyword>
<keyword id="KW-0648">Protein biosynthesis</keyword>
<reference key="1">
    <citation type="submission" date="2007-06" db="EMBL/GenBank/DDBJ databases">
        <authorList>
            <person name="Dodson R.J."/>
            <person name="Harkins D."/>
            <person name="Paulsen I.T."/>
        </authorList>
    </citation>
    <scope>NUCLEOTIDE SEQUENCE [LARGE SCALE GENOMIC DNA]</scope>
    <source>
        <strain>DSM 24068 / PA7</strain>
    </source>
</reference>
<evidence type="ECO:0000255" key="1">
    <source>
        <dbReference type="HAMAP-Rule" id="MF_00141"/>
    </source>
</evidence>
<sequence length="188" mass="20985">MKTAQEFRAGQVANINGAPWVIQKAEFNKSGRNAAVVKMKLKNLLTGAGTETVFKADDKLEPIILDRKEVTYSYFADPLYVFMDSEFNQYEIEKDDLEGVLTFIEDGMTDICEAVFYNDKVISVELPTTIVRQIAYTEPAVRGDTSGKVMKTARLNNGAELQVSAFCEIGDSIEIDTRTGEYKSRVKA</sequence>
<name>EFP_PSEP7</name>
<comment type="function">
    <text evidence="1">Involved in peptide bond synthesis. Stimulates efficient translation and peptide-bond synthesis on native or reconstituted 70S ribosomes in vitro. Probably functions indirectly by altering the affinity of the ribosome for aminoacyl-tRNA, thus increasing their reactivity as acceptors for peptidyl transferase.</text>
</comment>
<comment type="pathway">
    <text evidence="1">Protein biosynthesis; polypeptide chain elongation.</text>
</comment>
<comment type="subcellular location">
    <subcellularLocation>
        <location evidence="1">Cytoplasm</location>
    </subcellularLocation>
</comment>
<comment type="similarity">
    <text evidence="1">Belongs to the elongation factor P family.</text>
</comment>
<protein>
    <recommendedName>
        <fullName evidence="1">Elongation factor P</fullName>
        <shortName evidence="1">EF-P</shortName>
    </recommendedName>
</protein>
<accession>A6V3N9</accession>
<gene>
    <name evidence="1" type="primary">efp</name>
    <name type="ordered locus">PSPA7_2304</name>
</gene>
<organism>
    <name type="scientific">Pseudomonas paraeruginosa (strain DSM 24068 / PA7)</name>
    <name type="common">Pseudomonas aeruginosa (strain PA7)</name>
    <dbReference type="NCBI Taxonomy" id="381754"/>
    <lineage>
        <taxon>Bacteria</taxon>
        <taxon>Pseudomonadati</taxon>
        <taxon>Pseudomonadota</taxon>
        <taxon>Gammaproteobacteria</taxon>
        <taxon>Pseudomonadales</taxon>
        <taxon>Pseudomonadaceae</taxon>
        <taxon>Pseudomonas</taxon>
        <taxon>Pseudomonas paraeruginosa</taxon>
    </lineage>
</organism>
<dbReference type="EMBL" id="CP000744">
    <property type="protein sequence ID" value="ABR86832.1"/>
    <property type="molecule type" value="Genomic_DNA"/>
</dbReference>
<dbReference type="RefSeq" id="WP_003090942.1">
    <property type="nucleotide sequence ID" value="NC_009656.1"/>
</dbReference>
<dbReference type="SMR" id="A6V3N9"/>
<dbReference type="GeneID" id="77220646"/>
<dbReference type="KEGG" id="pap:PSPA7_2304"/>
<dbReference type="HOGENOM" id="CLU_074944_2_1_6"/>
<dbReference type="UniPathway" id="UPA00345"/>
<dbReference type="Proteomes" id="UP000001582">
    <property type="component" value="Chromosome"/>
</dbReference>
<dbReference type="GO" id="GO:0005737">
    <property type="term" value="C:cytoplasm"/>
    <property type="evidence" value="ECO:0007669"/>
    <property type="project" value="UniProtKB-SubCell"/>
</dbReference>
<dbReference type="GO" id="GO:0003746">
    <property type="term" value="F:translation elongation factor activity"/>
    <property type="evidence" value="ECO:0007669"/>
    <property type="project" value="UniProtKB-UniRule"/>
</dbReference>
<dbReference type="GO" id="GO:0043043">
    <property type="term" value="P:peptide biosynthetic process"/>
    <property type="evidence" value="ECO:0007669"/>
    <property type="project" value="InterPro"/>
</dbReference>
<dbReference type="CDD" id="cd04470">
    <property type="entry name" value="S1_EF-P_repeat_1"/>
    <property type="match status" value="1"/>
</dbReference>
<dbReference type="CDD" id="cd05794">
    <property type="entry name" value="S1_EF-P_repeat_2"/>
    <property type="match status" value="1"/>
</dbReference>
<dbReference type="FunFam" id="2.30.30.30:FF:000003">
    <property type="entry name" value="Elongation factor P"/>
    <property type="match status" value="1"/>
</dbReference>
<dbReference type="FunFam" id="2.40.50.140:FF:000004">
    <property type="entry name" value="Elongation factor P"/>
    <property type="match status" value="1"/>
</dbReference>
<dbReference type="FunFam" id="2.40.50.140:FF:000009">
    <property type="entry name" value="Elongation factor P"/>
    <property type="match status" value="1"/>
</dbReference>
<dbReference type="Gene3D" id="2.30.30.30">
    <property type="match status" value="1"/>
</dbReference>
<dbReference type="Gene3D" id="2.40.50.140">
    <property type="entry name" value="Nucleic acid-binding proteins"/>
    <property type="match status" value="2"/>
</dbReference>
<dbReference type="HAMAP" id="MF_00141">
    <property type="entry name" value="EF_P"/>
    <property type="match status" value="1"/>
</dbReference>
<dbReference type="InterPro" id="IPR015365">
    <property type="entry name" value="Elong-fact-P_C"/>
</dbReference>
<dbReference type="InterPro" id="IPR012340">
    <property type="entry name" value="NA-bd_OB-fold"/>
</dbReference>
<dbReference type="InterPro" id="IPR014722">
    <property type="entry name" value="Rib_uL2_dom2"/>
</dbReference>
<dbReference type="InterPro" id="IPR020599">
    <property type="entry name" value="Transl_elong_fac_P/YeiP"/>
</dbReference>
<dbReference type="InterPro" id="IPR013185">
    <property type="entry name" value="Transl_elong_KOW-like"/>
</dbReference>
<dbReference type="InterPro" id="IPR001059">
    <property type="entry name" value="Transl_elong_P/YeiP_cen"/>
</dbReference>
<dbReference type="InterPro" id="IPR011768">
    <property type="entry name" value="Transl_elongation_fac_P"/>
</dbReference>
<dbReference type="InterPro" id="IPR008991">
    <property type="entry name" value="Translation_prot_SH3-like_sf"/>
</dbReference>
<dbReference type="NCBIfam" id="TIGR00038">
    <property type="entry name" value="efp"/>
    <property type="match status" value="1"/>
</dbReference>
<dbReference type="NCBIfam" id="NF001810">
    <property type="entry name" value="PRK00529.1"/>
    <property type="match status" value="1"/>
</dbReference>
<dbReference type="PANTHER" id="PTHR30053">
    <property type="entry name" value="ELONGATION FACTOR P"/>
    <property type="match status" value="1"/>
</dbReference>
<dbReference type="PANTHER" id="PTHR30053:SF12">
    <property type="entry name" value="ELONGATION FACTOR P (EF-P) FAMILY PROTEIN"/>
    <property type="match status" value="1"/>
</dbReference>
<dbReference type="Pfam" id="PF01132">
    <property type="entry name" value="EFP"/>
    <property type="match status" value="1"/>
</dbReference>
<dbReference type="Pfam" id="PF08207">
    <property type="entry name" value="EFP_N"/>
    <property type="match status" value="1"/>
</dbReference>
<dbReference type="Pfam" id="PF09285">
    <property type="entry name" value="Elong-fact-P_C"/>
    <property type="match status" value="1"/>
</dbReference>
<dbReference type="PIRSF" id="PIRSF005901">
    <property type="entry name" value="EF-P"/>
    <property type="match status" value="1"/>
</dbReference>
<dbReference type="SMART" id="SM01185">
    <property type="entry name" value="EFP"/>
    <property type="match status" value="1"/>
</dbReference>
<dbReference type="SMART" id="SM00841">
    <property type="entry name" value="Elong-fact-P_C"/>
    <property type="match status" value="1"/>
</dbReference>
<dbReference type="SUPFAM" id="SSF50249">
    <property type="entry name" value="Nucleic acid-binding proteins"/>
    <property type="match status" value="2"/>
</dbReference>
<dbReference type="SUPFAM" id="SSF50104">
    <property type="entry name" value="Translation proteins SH3-like domain"/>
    <property type="match status" value="1"/>
</dbReference>